<comment type="subcellular location">
    <subcellularLocation>
        <location evidence="4">Membrane</location>
        <topology evidence="4">Single-pass membrane protein</topology>
    </subcellularLocation>
</comment>
<dbReference type="EMBL" id="AK052739">
    <property type="protein sequence ID" value="BAC35126.1"/>
    <property type="molecule type" value="mRNA"/>
</dbReference>
<dbReference type="EMBL" id="AK155213">
    <property type="protein sequence ID" value="BAE33124.1"/>
    <property type="molecule type" value="mRNA"/>
</dbReference>
<dbReference type="EMBL" id="AK168260">
    <property type="protein sequence ID" value="BAE40208.1"/>
    <property type="molecule type" value="mRNA"/>
</dbReference>
<dbReference type="EMBL" id="AK169672">
    <property type="protein sequence ID" value="BAE41293.1"/>
    <property type="molecule type" value="mRNA"/>
</dbReference>
<dbReference type="EMBL" id="AK170238">
    <property type="protein sequence ID" value="BAE41653.1"/>
    <property type="molecule type" value="mRNA"/>
</dbReference>
<dbReference type="EMBL" id="BC038694">
    <property type="protein sequence ID" value="AAH38694.1"/>
    <property type="molecule type" value="mRNA"/>
</dbReference>
<dbReference type="EMBL" id="BC064101">
    <property type="protein sequence ID" value="AAH64101.1"/>
    <property type="molecule type" value="mRNA"/>
</dbReference>
<dbReference type="CCDS" id="CCDS21857.1"/>
<dbReference type="RefSeq" id="NP_849232.1">
    <property type="nucleotide sequence ID" value="NM_178901.3"/>
</dbReference>
<dbReference type="RefSeq" id="XP_006507225.1">
    <property type="nucleotide sequence ID" value="XM_006507162.4"/>
</dbReference>
<dbReference type="SMR" id="Q8C708"/>
<dbReference type="FunCoup" id="Q8C708">
    <property type="interactions" value="27"/>
</dbReference>
<dbReference type="STRING" id="10090.ENSMUSP00000063016"/>
<dbReference type="GlyGen" id="Q8C708">
    <property type="glycosylation" value="2 sites"/>
</dbReference>
<dbReference type="iPTMnet" id="Q8C708"/>
<dbReference type="PhosphoSitePlus" id="Q8C708"/>
<dbReference type="jPOST" id="Q8C708"/>
<dbReference type="PaxDb" id="10090-ENSMUSP00000063016"/>
<dbReference type="PeptideAtlas" id="Q8C708"/>
<dbReference type="Antibodypedia" id="54098">
    <property type="antibodies" value="70 antibodies from 14 providers"/>
</dbReference>
<dbReference type="DNASU" id="101602"/>
<dbReference type="Ensembl" id="ENSMUST00000056288.7">
    <property type="protein sequence ID" value="ENSMUSP00000063016.6"/>
    <property type="gene ID" value="ENSMUSG00000045165.7"/>
</dbReference>
<dbReference type="Ensembl" id="ENSMUST00000206102.2">
    <property type="protein sequence ID" value="ENSMUSP00000146315.2"/>
    <property type="gene ID" value="ENSMUSG00000045165.7"/>
</dbReference>
<dbReference type="GeneID" id="101602"/>
<dbReference type="KEGG" id="mmu:101602"/>
<dbReference type="UCSC" id="uc009juf.1">
    <property type="organism name" value="mouse"/>
</dbReference>
<dbReference type="AGR" id="MGI:2141979"/>
<dbReference type="MGI" id="MGI:2141979">
    <property type="gene designation" value="AI467606"/>
</dbReference>
<dbReference type="VEuPathDB" id="HostDB:ENSMUSG00000045165"/>
<dbReference type="eggNOG" id="ENOG502SP19">
    <property type="taxonomic scope" value="Eukaryota"/>
</dbReference>
<dbReference type="GeneTree" id="ENSGT00390000014957"/>
<dbReference type="HOGENOM" id="CLU_1224436_0_0_1"/>
<dbReference type="InParanoid" id="Q8C708"/>
<dbReference type="OMA" id="SWPPLPC"/>
<dbReference type="OrthoDB" id="9834691at2759"/>
<dbReference type="PhylomeDB" id="Q8C708"/>
<dbReference type="TreeFam" id="TF337660"/>
<dbReference type="BioGRID-ORCS" id="101602">
    <property type="hits" value="1 hit in 77 CRISPR screens"/>
</dbReference>
<dbReference type="PRO" id="PR:Q8C708"/>
<dbReference type="Proteomes" id="UP000000589">
    <property type="component" value="Chromosome 7"/>
</dbReference>
<dbReference type="RNAct" id="Q8C708">
    <property type="molecule type" value="protein"/>
</dbReference>
<dbReference type="Bgee" id="ENSMUSG00000045165">
    <property type="expression patterns" value="Expressed in peripheral lymph node and 178 other cell types or tissues"/>
</dbReference>
<dbReference type="GO" id="GO:0016020">
    <property type="term" value="C:membrane"/>
    <property type="evidence" value="ECO:0007669"/>
    <property type="project" value="UniProtKB-SubCell"/>
</dbReference>
<dbReference type="InterPro" id="IPR031499">
    <property type="entry name" value="DUF4689"/>
</dbReference>
<dbReference type="PANTHER" id="PTHR36134">
    <property type="entry name" value="TRANSMEMBRANE PROTEIN C16ORF54"/>
    <property type="match status" value="1"/>
</dbReference>
<dbReference type="PANTHER" id="PTHR36134:SF1">
    <property type="entry name" value="TRANSMEMBRANE PROTEIN C16ORF54"/>
    <property type="match status" value="1"/>
</dbReference>
<dbReference type="Pfam" id="PF15755">
    <property type="entry name" value="DUF4689"/>
    <property type="match status" value="1"/>
</dbReference>
<accession>Q8C708</accession>
<accession>Q6P3A6</accession>
<name>CP054_MOUSE</name>
<protein>
    <recommendedName>
        <fullName>Transmembrane protein C16orf54 homolog</fullName>
    </recommendedName>
</protein>
<organism>
    <name type="scientific">Mus musculus</name>
    <name type="common">Mouse</name>
    <dbReference type="NCBI Taxonomy" id="10090"/>
    <lineage>
        <taxon>Eukaryota</taxon>
        <taxon>Metazoa</taxon>
        <taxon>Chordata</taxon>
        <taxon>Craniata</taxon>
        <taxon>Vertebrata</taxon>
        <taxon>Euteleostomi</taxon>
        <taxon>Mammalia</taxon>
        <taxon>Eutheria</taxon>
        <taxon>Euarchontoglires</taxon>
        <taxon>Glires</taxon>
        <taxon>Rodentia</taxon>
        <taxon>Myomorpha</taxon>
        <taxon>Muroidea</taxon>
        <taxon>Muridae</taxon>
        <taxon>Murinae</taxon>
        <taxon>Mus</taxon>
        <taxon>Mus</taxon>
    </lineage>
</organism>
<feature type="chain" id="PRO_0000279443" description="Transmembrane protein C16orf54 homolog">
    <location>
        <begin position="1"/>
        <end position="225"/>
    </location>
</feature>
<feature type="transmembrane region" description="Helical" evidence="2">
    <location>
        <begin position="32"/>
        <end position="52"/>
    </location>
</feature>
<feature type="region of interest" description="Disordered" evidence="3">
    <location>
        <begin position="106"/>
        <end position="163"/>
    </location>
</feature>
<feature type="region of interest" description="Disordered" evidence="3">
    <location>
        <begin position="178"/>
        <end position="200"/>
    </location>
</feature>
<feature type="compositionally biased region" description="Low complexity" evidence="3">
    <location>
        <begin position="122"/>
        <end position="140"/>
    </location>
</feature>
<feature type="modified residue" description="Phosphothreonine" evidence="1">
    <location>
        <position position="113"/>
    </location>
</feature>
<feature type="modified residue" description="Phosphothreonine" evidence="1">
    <location>
        <position position="117"/>
    </location>
</feature>
<feature type="modified residue" description="Phosphoserine" evidence="5 6">
    <location>
        <position position="195"/>
    </location>
</feature>
<feature type="sequence conflict" description="In Ref. 2; AAH64101." evidence="4" ref="2">
    <original>R</original>
    <variation>L</variation>
    <location>
        <position position="92"/>
    </location>
</feature>
<proteinExistence type="evidence at protein level"/>
<reference key="1">
    <citation type="journal article" date="2005" name="Science">
        <title>The transcriptional landscape of the mammalian genome.</title>
        <authorList>
            <person name="Carninci P."/>
            <person name="Kasukawa T."/>
            <person name="Katayama S."/>
            <person name="Gough J."/>
            <person name="Frith M.C."/>
            <person name="Maeda N."/>
            <person name="Oyama R."/>
            <person name="Ravasi T."/>
            <person name="Lenhard B."/>
            <person name="Wells C."/>
            <person name="Kodzius R."/>
            <person name="Shimokawa K."/>
            <person name="Bajic V.B."/>
            <person name="Brenner S.E."/>
            <person name="Batalov S."/>
            <person name="Forrest A.R."/>
            <person name="Zavolan M."/>
            <person name="Davis M.J."/>
            <person name="Wilming L.G."/>
            <person name="Aidinis V."/>
            <person name="Allen J.E."/>
            <person name="Ambesi-Impiombato A."/>
            <person name="Apweiler R."/>
            <person name="Aturaliya R.N."/>
            <person name="Bailey T.L."/>
            <person name="Bansal M."/>
            <person name="Baxter L."/>
            <person name="Beisel K.W."/>
            <person name="Bersano T."/>
            <person name="Bono H."/>
            <person name="Chalk A.M."/>
            <person name="Chiu K.P."/>
            <person name="Choudhary V."/>
            <person name="Christoffels A."/>
            <person name="Clutterbuck D.R."/>
            <person name="Crowe M.L."/>
            <person name="Dalla E."/>
            <person name="Dalrymple B.P."/>
            <person name="de Bono B."/>
            <person name="Della Gatta G."/>
            <person name="di Bernardo D."/>
            <person name="Down T."/>
            <person name="Engstrom P."/>
            <person name="Fagiolini M."/>
            <person name="Faulkner G."/>
            <person name="Fletcher C.F."/>
            <person name="Fukushima T."/>
            <person name="Furuno M."/>
            <person name="Futaki S."/>
            <person name="Gariboldi M."/>
            <person name="Georgii-Hemming P."/>
            <person name="Gingeras T.R."/>
            <person name="Gojobori T."/>
            <person name="Green R.E."/>
            <person name="Gustincich S."/>
            <person name="Harbers M."/>
            <person name="Hayashi Y."/>
            <person name="Hensch T.K."/>
            <person name="Hirokawa N."/>
            <person name="Hill D."/>
            <person name="Huminiecki L."/>
            <person name="Iacono M."/>
            <person name="Ikeo K."/>
            <person name="Iwama A."/>
            <person name="Ishikawa T."/>
            <person name="Jakt M."/>
            <person name="Kanapin A."/>
            <person name="Katoh M."/>
            <person name="Kawasawa Y."/>
            <person name="Kelso J."/>
            <person name="Kitamura H."/>
            <person name="Kitano H."/>
            <person name="Kollias G."/>
            <person name="Krishnan S.P."/>
            <person name="Kruger A."/>
            <person name="Kummerfeld S.K."/>
            <person name="Kurochkin I.V."/>
            <person name="Lareau L.F."/>
            <person name="Lazarevic D."/>
            <person name="Lipovich L."/>
            <person name="Liu J."/>
            <person name="Liuni S."/>
            <person name="McWilliam S."/>
            <person name="Madan Babu M."/>
            <person name="Madera M."/>
            <person name="Marchionni L."/>
            <person name="Matsuda H."/>
            <person name="Matsuzawa S."/>
            <person name="Miki H."/>
            <person name="Mignone F."/>
            <person name="Miyake S."/>
            <person name="Morris K."/>
            <person name="Mottagui-Tabar S."/>
            <person name="Mulder N."/>
            <person name="Nakano N."/>
            <person name="Nakauchi H."/>
            <person name="Ng P."/>
            <person name="Nilsson R."/>
            <person name="Nishiguchi S."/>
            <person name="Nishikawa S."/>
            <person name="Nori F."/>
            <person name="Ohara O."/>
            <person name="Okazaki Y."/>
            <person name="Orlando V."/>
            <person name="Pang K.C."/>
            <person name="Pavan W.J."/>
            <person name="Pavesi G."/>
            <person name="Pesole G."/>
            <person name="Petrovsky N."/>
            <person name="Piazza S."/>
            <person name="Reed J."/>
            <person name="Reid J.F."/>
            <person name="Ring B.Z."/>
            <person name="Ringwald M."/>
            <person name="Rost B."/>
            <person name="Ruan Y."/>
            <person name="Salzberg S.L."/>
            <person name="Sandelin A."/>
            <person name="Schneider C."/>
            <person name="Schoenbach C."/>
            <person name="Sekiguchi K."/>
            <person name="Semple C.A."/>
            <person name="Seno S."/>
            <person name="Sessa L."/>
            <person name="Sheng Y."/>
            <person name="Shibata Y."/>
            <person name="Shimada H."/>
            <person name="Shimada K."/>
            <person name="Silva D."/>
            <person name="Sinclair B."/>
            <person name="Sperling S."/>
            <person name="Stupka E."/>
            <person name="Sugiura K."/>
            <person name="Sultana R."/>
            <person name="Takenaka Y."/>
            <person name="Taki K."/>
            <person name="Tammoja K."/>
            <person name="Tan S.L."/>
            <person name="Tang S."/>
            <person name="Taylor M.S."/>
            <person name="Tegner J."/>
            <person name="Teichmann S.A."/>
            <person name="Ueda H.R."/>
            <person name="van Nimwegen E."/>
            <person name="Verardo R."/>
            <person name="Wei C.L."/>
            <person name="Yagi K."/>
            <person name="Yamanishi H."/>
            <person name="Zabarovsky E."/>
            <person name="Zhu S."/>
            <person name="Zimmer A."/>
            <person name="Hide W."/>
            <person name="Bult C."/>
            <person name="Grimmond S.M."/>
            <person name="Teasdale R.D."/>
            <person name="Liu E.T."/>
            <person name="Brusic V."/>
            <person name="Quackenbush J."/>
            <person name="Wahlestedt C."/>
            <person name="Mattick J.S."/>
            <person name="Hume D.A."/>
            <person name="Kai C."/>
            <person name="Sasaki D."/>
            <person name="Tomaru Y."/>
            <person name="Fukuda S."/>
            <person name="Kanamori-Katayama M."/>
            <person name="Suzuki M."/>
            <person name="Aoki J."/>
            <person name="Arakawa T."/>
            <person name="Iida J."/>
            <person name="Imamura K."/>
            <person name="Itoh M."/>
            <person name="Kato T."/>
            <person name="Kawaji H."/>
            <person name="Kawagashira N."/>
            <person name="Kawashima T."/>
            <person name="Kojima M."/>
            <person name="Kondo S."/>
            <person name="Konno H."/>
            <person name="Nakano K."/>
            <person name="Ninomiya N."/>
            <person name="Nishio T."/>
            <person name="Okada M."/>
            <person name="Plessy C."/>
            <person name="Shibata K."/>
            <person name="Shiraki T."/>
            <person name="Suzuki S."/>
            <person name="Tagami M."/>
            <person name="Waki K."/>
            <person name="Watahiki A."/>
            <person name="Okamura-Oho Y."/>
            <person name="Suzuki H."/>
            <person name="Kawai J."/>
            <person name="Hayashizaki Y."/>
        </authorList>
    </citation>
    <scope>NUCLEOTIDE SEQUENCE [LARGE SCALE MRNA]</scope>
    <source>
        <strain>C57BL/6J</strain>
        <strain>DBA/2J</strain>
        <strain>NOD</strain>
        <tissue>Kidney</tissue>
        <tissue>Thymus</tissue>
    </source>
</reference>
<reference key="2">
    <citation type="journal article" date="2004" name="Genome Res.">
        <title>The status, quality, and expansion of the NIH full-length cDNA project: the Mammalian Gene Collection (MGC).</title>
        <authorList>
            <consortium name="The MGC Project Team"/>
        </authorList>
    </citation>
    <scope>NUCLEOTIDE SEQUENCE [LARGE SCALE MRNA]</scope>
    <source>
        <strain>C57BL/6J</strain>
        <tissue>Mammary gland</tissue>
    </source>
</reference>
<reference key="3">
    <citation type="journal article" date="2009" name="Immunity">
        <title>The phagosomal proteome in interferon-gamma-activated macrophages.</title>
        <authorList>
            <person name="Trost M."/>
            <person name="English L."/>
            <person name="Lemieux S."/>
            <person name="Courcelles M."/>
            <person name="Desjardins M."/>
            <person name="Thibault P."/>
        </authorList>
    </citation>
    <scope>PHOSPHORYLATION [LARGE SCALE ANALYSIS] AT SER-195</scope>
    <scope>IDENTIFICATION BY MASS SPECTROMETRY [LARGE SCALE ANALYSIS]</scope>
</reference>
<reference key="4">
    <citation type="journal article" date="2010" name="Cell">
        <title>A tissue-specific atlas of mouse protein phosphorylation and expression.</title>
        <authorList>
            <person name="Huttlin E.L."/>
            <person name="Jedrychowski M.P."/>
            <person name="Elias J.E."/>
            <person name="Goswami T."/>
            <person name="Rad R."/>
            <person name="Beausoleil S.A."/>
            <person name="Villen J."/>
            <person name="Haas W."/>
            <person name="Sowa M.E."/>
            <person name="Gygi S.P."/>
        </authorList>
    </citation>
    <scope>PHOSPHORYLATION [LARGE SCALE ANALYSIS] AT SER-195</scope>
    <scope>IDENTIFICATION BY MASS SPECTROMETRY [LARGE SCALE ANALYSIS]</scope>
    <source>
        <tissue>Lung</tissue>
        <tissue>Spleen</tissue>
    </source>
</reference>
<keyword id="KW-0472">Membrane</keyword>
<keyword id="KW-0597">Phosphoprotein</keyword>
<keyword id="KW-1185">Reference proteome</keyword>
<keyword id="KW-0812">Transmembrane</keyword>
<keyword id="KW-1133">Transmembrane helix</keyword>
<sequence length="225" mass="24532">MPVTPQQPSGHTEGLPEPTAEAAVWVVIPCGPCIPIMLGLASLTAFFIITTAVLAERLFRRPQPDPSQRAPTLVWRPGGELWIEPTSSARERSEDWYGSSMPLLMDRAPGPPTPGGTLEGRATAPPATSAPYSSLSSLVPQTPPEVPAQSTFWRPQTQEERPHDTSLVSWVGSEPMPEAGLQVGSPRPWRPRQGSLEPDWGLQPRVTLEQISAFWKREGRTSVGF</sequence>
<evidence type="ECO:0000250" key="1">
    <source>
        <dbReference type="UniProtKB" id="Q5BK39"/>
    </source>
</evidence>
<evidence type="ECO:0000255" key="2"/>
<evidence type="ECO:0000256" key="3">
    <source>
        <dbReference type="SAM" id="MobiDB-lite"/>
    </source>
</evidence>
<evidence type="ECO:0000305" key="4"/>
<evidence type="ECO:0007744" key="5">
    <source>
    </source>
</evidence>
<evidence type="ECO:0007744" key="6">
    <source>
    </source>
</evidence>